<dbReference type="EC" id="5.3.1.6" evidence="1"/>
<dbReference type="EMBL" id="CP001010">
    <property type="protein sequence ID" value="ACB43922.1"/>
    <property type="molecule type" value="Genomic_DNA"/>
</dbReference>
<dbReference type="SMR" id="B1XU95"/>
<dbReference type="STRING" id="452638.Pnec_0686"/>
<dbReference type="KEGG" id="pne:Pnec_0686"/>
<dbReference type="eggNOG" id="COG0120">
    <property type="taxonomic scope" value="Bacteria"/>
</dbReference>
<dbReference type="HOGENOM" id="CLU_056590_1_1_4"/>
<dbReference type="OrthoDB" id="5870696at2"/>
<dbReference type="UniPathway" id="UPA00115">
    <property type="reaction ID" value="UER00412"/>
</dbReference>
<dbReference type="GO" id="GO:0005829">
    <property type="term" value="C:cytosol"/>
    <property type="evidence" value="ECO:0007669"/>
    <property type="project" value="TreeGrafter"/>
</dbReference>
<dbReference type="GO" id="GO:0004751">
    <property type="term" value="F:ribose-5-phosphate isomerase activity"/>
    <property type="evidence" value="ECO:0007669"/>
    <property type="project" value="UniProtKB-UniRule"/>
</dbReference>
<dbReference type="GO" id="GO:0006014">
    <property type="term" value="P:D-ribose metabolic process"/>
    <property type="evidence" value="ECO:0007669"/>
    <property type="project" value="TreeGrafter"/>
</dbReference>
<dbReference type="GO" id="GO:0009052">
    <property type="term" value="P:pentose-phosphate shunt, non-oxidative branch"/>
    <property type="evidence" value="ECO:0007669"/>
    <property type="project" value="UniProtKB-UniRule"/>
</dbReference>
<dbReference type="CDD" id="cd01398">
    <property type="entry name" value="RPI_A"/>
    <property type="match status" value="1"/>
</dbReference>
<dbReference type="FunFam" id="3.40.50.1360:FF:000001">
    <property type="entry name" value="Ribose-5-phosphate isomerase A"/>
    <property type="match status" value="1"/>
</dbReference>
<dbReference type="Gene3D" id="3.30.70.260">
    <property type="match status" value="1"/>
</dbReference>
<dbReference type="Gene3D" id="3.40.50.1360">
    <property type="match status" value="1"/>
</dbReference>
<dbReference type="HAMAP" id="MF_00170">
    <property type="entry name" value="Rib_5P_isom_A"/>
    <property type="match status" value="1"/>
</dbReference>
<dbReference type="InterPro" id="IPR037171">
    <property type="entry name" value="NagB/RpiA_transferase-like"/>
</dbReference>
<dbReference type="InterPro" id="IPR020672">
    <property type="entry name" value="Ribose5P_isomerase_typA_subgr"/>
</dbReference>
<dbReference type="InterPro" id="IPR004788">
    <property type="entry name" value="Ribose5P_isomerase_type_A"/>
</dbReference>
<dbReference type="NCBIfam" id="NF001924">
    <property type="entry name" value="PRK00702.1"/>
    <property type="match status" value="1"/>
</dbReference>
<dbReference type="NCBIfam" id="TIGR00021">
    <property type="entry name" value="rpiA"/>
    <property type="match status" value="1"/>
</dbReference>
<dbReference type="PANTHER" id="PTHR11934">
    <property type="entry name" value="RIBOSE-5-PHOSPHATE ISOMERASE"/>
    <property type="match status" value="1"/>
</dbReference>
<dbReference type="PANTHER" id="PTHR11934:SF0">
    <property type="entry name" value="RIBOSE-5-PHOSPHATE ISOMERASE"/>
    <property type="match status" value="1"/>
</dbReference>
<dbReference type="Pfam" id="PF06026">
    <property type="entry name" value="Rib_5-P_isom_A"/>
    <property type="match status" value="1"/>
</dbReference>
<dbReference type="SUPFAM" id="SSF75445">
    <property type="entry name" value="D-ribose-5-phosphate isomerase (RpiA), lid domain"/>
    <property type="match status" value="1"/>
</dbReference>
<dbReference type="SUPFAM" id="SSF100950">
    <property type="entry name" value="NagB/RpiA/CoA transferase-like"/>
    <property type="match status" value="1"/>
</dbReference>
<reference key="1">
    <citation type="journal article" date="2013" name="Proc. Natl. Acad. Sci. U.S.A.">
        <title>Polynucleobacter necessarius, a model for genome reduction in both free-living and symbiotic bacteria.</title>
        <authorList>
            <person name="Boscaro V."/>
            <person name="Felletti M."/>
            <person name="Vannini C."/>
            <person name="Ackerman M.S."/>
            <person name="Chain P.S."/>
            <person name="Malfatti S."/>
            <person name="Vergez L.M."/>
            <person name="Shin M."/>
            <person name="Doak T.G."/>
            <person name="Lynch M."/>
            <person name="Petroni G."/>
        </authorList>
    </citation>
    <scope>NUCLEOTIDE SEQUENCE [LARGE SCALE GENOMIC DNA]</scope>
    <source>
        <strain>STIR1</strain>
    </source>
</reference>
<sequence length="236" mass="24940">MNQDQLKQMVGEAARDEVLKLPAGQVLGVGTGSTANYFIDALALHKGHFAGTVSSSNATTERLLKHGFKVLDPNDVQGLPAYVDGADEIDPAGHMIKGGGGVLTGEKIIASMAKQFICICDSSKQVPVLGNFALPVEIIPLSQGVVSRELEKFGGRVTLRLAKHTRADLNQTPSEPFVTDNGGWILDVAGLRIASPAQMEAQINQIAGVITVGLFAKEKANILLVSNAAGVERIQF</sequence>
<comment type="function">
    <text evidence="1">Catalyzes the reversible conversion of ribose-5-phosphate to ribulose 5-phosphate.</text>
</comment>
<comment type="catalytic activity">
    <reaction evidence="1">
        <text>aldehydo-D-ribose 5-phosphate = D-ribulose 5-phosphate</text>
        <dbReference type="Rhea" id="RHEA:14657"/>
        <dbReference type="ChEBI" id="CHEBI:58121"/>
        <dbReference type="ChEBI" id="CHEBI:58273"/>
        <dbReference type="EC" id="5.3.1.6"/>
    </reaction>
</comment>
<comment type="pathway">
    <text evidence="1">Carbohydrate degradation; pentose phosphate pathway; D-ribose 5-phosphate from D-ribulose 5-phosphate (non-oxidative stage): step 1/1.</text>
</comment>
<comment type="subunit">
    <text evidence="1">Homodimer.</text>
</comment>
<comment type="similarity">
    <text evidence="1">Belongs to the ribose 5-phosphate isomerase family.</text>
</comment>
<organism>
    <name type="scientific">Polynucleobacter necessarius subsp. necessarius (strain STIR1)</name>
    <dbReference type="NCBI Taxonomy" id="452638"/>
    <lineage>
        <taxon>Bacteria</taxon>
        <taxon>Pseudomonadati</taxon>
        <taxon>Pseudomonadota</taxon>
        <taxon>Betaproteobacteria</taxon>
        <taxon>Burkholderiales</taxon>
        <taxon>Burkholderiaceae</taxon>
        <taxon>Polynucleobacter</taxon>
    </lineage>
</organism>
<gene>
    <name evidence="1" type="primary">rpiA</name>
    <name type="ordered locus">Pnec_0686</name>
</gene>
<keyword id="KW-0413">Isomerase</keyword>
<proteinExistence type="inferred from homology"/>
<protein>
    <recommendedName>
        <fullName evidence="1">Ribose-5-phosphate isomerase A</fullName>
        <ecNumber evidence="1">5.3.1.6</ecNumber>
    </recommendedName>
    <alternativeName>
        <fullName evidence="1">Phosphoriboisomerase A</fullName>
        <shortName evidence="1">PRI</shortName>
    </alternativeName>
</protein>
<feature type="chain" id="PRO_1000097680" description="Ribose-5-phosphate isomerase A">
    <location>
        <begin position="1"/>
        <end position="236"/>
    </location>
</feature>
<feature type="active site" description="Proton acceptor" evidence="1">
    <location>
        <position position="106"/>
    </location>
</feature>
<feature type="binding site" evidence="1">
    <location>
        <begin position="31"/>
        <end position="34"/>
    </location>
    <ligand>
        <name>substrate</name>
    </ligand>
</feature>
<feature type="binding site" evidence="1">
    <location>
        <begin position="84"/>
        <end position="87"/>
    </location>
    <ligand>
        <name>substrate</name>
    </ligand>
</feature>
<feature type="binding site" evidence="1">
    <location>
        <begin position="97"/>
        <end position="100"/>
    </location>
    <ligand>
        <name>substrate</name>
    </ligand>
</feature>
<feature type="binding site" evidence="1">
    <location>
        <position position="124"/>
    </location>
    <ligand>
        <name>substrate</name>
    </ligand>
</feature>
<evidence type="ECO:0000255" key="1">
    <source>
        <dbReference type="HAMAP-Rule" id="MF_00170"/>
    </source>
</evidence>
<accession>B1XU95</accession>
<name>RPIA_POLNS</name>